<feature type="chain" id="PRO_0000311441" description="Iron-sulfur cluster insertion protein ErpA">
    <location>
        <begin position="1"/>
        <end position="116"/>
    </location>
</feature>
<feature type="binding site" evidence="1">
    <location>
        <position position="44"/>
    </location>
    <ligand>
        <name>iron-sulfur cluster</name>
        <dbReference type="ChEBI" id="CHEBI:30408"/>
    </ligand>
</feature>
<feature type="binding site" evidence="1">
    <location>
        <position position="108"/>
    </location>
    <ligand>
        <name>iron-sulfur cluster</name>
        <dbReference type="ChEBI" id="CHEBI:30408"/>
    </ligand>
</feature>
<feature type="binding site" evidence="1">
    <location>
        <position position="110"/>
    </location>
    <ligand>
        <name>iron-sulfur cluster</name>
        <dbReference type="ChEBI" id="CHEBI:30408"/>
    </ligand>
</feature>
<reference key="1">
    <citation type="journal article" date="2008" name="BMC Genomics">
        <title>The genome of Aeromonas salmonicida subsp. salmonicida A449: insights into the evolution of a fish pathogen.</title>
        <authorList>
            <person name="Reith M.E."/>
            <person name="Singh R.K."/>
            <person name="Curtis B."/>
            <person name="Boyd J.M."/>
            <person name="Bouevitch A."/>
            <person name="Kimball J."/>
            <person name="Munholland J."/>
            <person name="Murphy C."/>
            <person name="Sarty D."/>
            <person name="Williams J."/>
            <person name="Nash J.H."/>
            <person name="Johnson S.C."/>
            <person name="Brown L.L."/>
        </authorList>
    </citation>
    <scope>NUCLEOTIDE SEQUENCE [LARGE SCALE GENOMIC DNA]</scope>
    <source>
        <strain>A449</strain>
    </source>
</reference>
<proteinExistence type="inferred from homology"/>
<protein>
    <recommendedName>
        <fullName evidence="1">Iron-sulfur cluster insertion protein ErpA</fullName>
    </recommendedName>
</protein>
<comment type="function">
    <text evidence="1">Required for insertion of 4Fe-4S clusters for at least IspG.</text>
</comment>
<comment type="cofactor">
    <cofactor evidence="1">
        <name>iron-sulfur cluster</name>
        <dbReference type="ChEBI" id="CHEBI:30408"/>
    </cofactor>
    <text evidence="1">Binds 1 iron-sulfur cluster per subunit.</text>
</comment>
<comment type="subunit">
    <text evidence="1">Homodimer.</text>
</comment>
<comment type="similarity">
    <text evidence="1">Belongs to the HesB/IscA family.</text>
</comment>
<keyword id="KW-0408">Iron</keyword>
<keyword id="KW-0411">Iron-sulfur</keyword>
<keyword id="KW-0479">Metal-binding</keyword>
<organism>
    <name type="scientific">Aeromonas salmonicida (strain A449)</name>
    <dbReference type="NCBI Taxonomy" id="382245"/>
    <lineage>
        <taxon>Bacteria</taxon>
        <taxon>Pseudomonadati</taxon>
        <taxon>Pseudomonadota</taxon>
        <taxon>Gammaproteobacteria</taxon>
        <taxon>Aeromonadales</taxon>
        <taxon>Aeromonadaceae</taxon>
        <taxon>Aeromonas</taxon>
    </lineage>
</organism>
<evidence type="ECO:0000255" key="1">
    <source>
        <dbReference type="HAMAP-Rule" id="MF_01380"/>
    </source>
</evidence>
<dbReference type="EMBL" id="CP000644">
    <property type="protein sequence ID" value="ABO88954.1"/>
    <property type="molecule type" value="Genomic_DNA"/>
</dbReference>
<dbReference type="RefSeq" id="WP_005313135.1">
    <property type="nucleotide sequence ID" value="NC_009348.1"/>
</dbReference>
<dbReference type="SMR" id="A4SJ82"/>
<dbReference type="STRING" id="29491.GCA_000820065_01687"/>
<dbReference type="GeneID" id="79878350"/>
<dbReference type="KEGG" id="asa:ASA_0800"/>
<dbReference type="eggNOG" id="COG0316">
    <property type="taxonomic scope" value="Bacteria"/>
</dbReference>
<dbReference type="HOGENOM" id="CLU_069054_5_3_6"/>
<dbReference type="Proteomes" id="UP000000225">
    <property type="component" value="Chromosome"/>
</dbReference>
<dbReference type="GO" id="GO:0005829">
    <property type="term" value="C:cytosol"/>
    <property type="evidence" value="ECO:0007669"/>
    <property type="project" value="TreeGrafter"/>
</dbReference>
<dbReference type="GO" id="GO:0051537">
    <property type="term" value="F:2 iron, 2 sulfur cluster binding"/>
    <property type="evidence" value="ECO:0007669"/>
    <property type="project" value="TreeGrafter"/>
</dbReference>
<dbReference type="GO" id="GO:0051539">
    <property type="term" value="F:4 iron, 4 sulfur cluster binding"/>
    <property type="evidence" value="ECO:0007669"/>
    <property type="project" value="TreeGrafter"/>
</dbReference>
<dbReference type="GO" id="GO:0005506">
    <property type="term" value="F:iron ion binding"/>
    <property type="evidence" value="ECO:0007669"/>
    <property type="project" value="UniProtKB-UniRule"/>
</dbReference>
<dbReference type="GO" id="GO:0016226">
    <property type="term" value="P:iron-sulfur cluster assembly"/>
    <property type="evidence" value="ECO:0007669"/>
    <property type="project" value="UniProtKB-UniRule"/>
</dbReference>
<dbReference type="FunFam" id="2.60.300.12:FF:000002">
    <property type="entry name" value="Iron-sulfur cluster insertion protein ErpA"/>
    <property type="match status" value="1"/>
</dbReference>
<dbReference type="Gene3D" id="2.60.300.12">
    <property type="entry name" value="HesB-like domain"/>
    <property type="match status" value="1"/>
</dbReference>
<dbReference type="HAMAP" id="MF_01380">
    <property type="entry name" value="Fe_S_insert_ErpA"/>
    <property type="match status" value="1"/>
</dbReference>
<dbReference type="InterPro" id="IPR000361">
    <property type="entry name" value="FeS_biogenesis"/>
</dbReference>
<dbReference type="InterPro" id="IPR016092">
    <property type="entry name" value="FeS_cluster_insertion"/>
</dbReference>
<dbReference type="InterPro" id="IPR017870">
    <property type="entry name" value="FeS_cluster_insertion_CS"/>
</dbReference>
<dbReference type="InterPro" id="IPR023063">
    <property type="entry name" value="FeS_cluster_insertion_RrpA"/>
</dbReference>
<dbReference type="InterPro" id="IPR035903">
    <property type="entry name" value="HesB-like_dom_sf"/>
</dbReference>
<dbReference type="NCBIfam" id="TIGR00049">
    <property type="entry name" value="iron-sulfur cluster assembly accessory protein"/>
    <property type="match status" value="1"/>
</dbReference>
<dbReference type="NCBIfam" id="NF010147">
    <property type="entry name" value="PRK13623.1"/>
    <property type="match status" value="1"/>
</dbReference>
<dbReference type="PANTHER" id="PTHR43011">
    <property type="entry name" value="IRON-SULFUR CLUSTER ASSEMBLY 2 HOMOLOG, MITOCHONDRIAL"/>
    <property type="match status" value="1"/>
</dbReference>
<dbReference type="PANTHER" id="PTHR43011:SF1">
    <property type="entry name" value="IRON-SULFUR CLUSTER ASSEMBLY 2 HOMOLOG, MITOCHONDRIAL"/>
    <property type="match status" value="1"/>
</dbReference>
<dbReference type="Pfam" id="PF01521">
    <property type="entry name" value="Fe-S_biosyn"/>
    <property type="match status" value="1"/>
</dbReference>
<dbReference type="SUPFAM" id="SSF89360">
    <property type="entry name" value="HesB-like domain"/>
    <property type="match status" value="1"/>
</dbReference>
<dbReference type="PROSITE" id="PS01152">
    <property type="entry name" value="HESB"/>
    <property type="match status" value="1"/>
</dbReference>
<sequence>MSAVAEAPLPIQMTDAAANKVKNLITEEENPELKLRVYITGGGCSGFQYGFTFDEKINEGDTVVEKSGVTMVIDPMSLQYLVGGSVDYTEGLEGSRFTVTNPNASTTCGCGSSFSI</sequence>
<gene>
    <name evidence="1" type="primary">erpA</name>
    <name type="ordered locus">ASA_0800</name>
</gene>
<accession>A4SJ82</accession>
<name>ERPA_AERS4</name>